<organism>
    <name type="scientific">Saccharomyces cerevisiae (strain ATCC 204508 / S288c)</name>
    <name type="common">Baker's yeast</name>
    <dbReference type="NCBI Taxonomy" id="559292"/>
    <lineage>
        <taxon>Eukaryota</taxon>
        <taxon>Fungi</taxon>
        <taxon>Dikarya</taxon>
        <taxon>Ascomycota</taxon>
        <taxon>Saccharomycotina</taxon>
        <taxon>Saccharomycetes</taxon>
        <taxon>Saccharomycetales</taxon>
        <taxon>Saccharomycetaceae</taxon>
        <taxon>Saccharomyces</taxon>
    </lineage>
</organism>
<feature type="chain" id="PRO_0000073960" description="DNA-directed RNA polymerase I subunit RPA43">
    <location>
        <begin position="1"/>
        <end position="326"/>
    </location>
</feature>
<feature type="region of interest" description="Disordered" evidence="1">
    <location>
        <begin position="179"/>
        <end position="202"/>
    </location>
</feature>
<feature type="region of interest" description="Disordered" evidence="1">
    <location>
        <begin position="288"/>
        <end position="326"/>
    </location>
</feature>
<feature type="compositionally biased region" description="Low complexity" evidence="1">
    <location>
        <begin position="182"/>
        <end position="202"/>
    </location>
</feature>
<feature type="compositionally biased region" description="Basic and acidic residues" evidence="1">
    <location>
        <begin position="288"/>
        <end position="304"/>
    </location>
</feature>
<feature type="compositionally biased region" description="Acidic residues" evidence="1">
    <location>
        <begin position="309"/>
        <end position="326"/>
    </location>
</feature>
<feature type="modified residue" description="Phosphoserine" evidence="14">
    <location>
        <position position="244"/>
    </location>
</feature>
<feature type="modified residue" description="Phosphoserine" evidence="14">
    <location>
        <position position="251"/>
    </location>
</feature>
<feature type="modified residue" description="Phosphoserine" evidence="14 15">
    <location>
        <position position="265"/>
    </location>
</feature>
<feature type="modified residue" description="Phosphoserine" evidence="14">
    <location>
        <position position="269"/>
    </location>
</feature>
<feature type="modified residue" description="Phosphoserine" evidence="12 13 14 15">
    <location>
        <position position="285"/>
    </location>
</feature>
<feature type="sequence conflict" description="In Ref. 1; AAC49076." evidence="11" ref="1">
    <original>N</original>
    <variation>D</variation>
    <location>
        <position position="318"/>
    </location>
</feature>
<feature type="strand" evidence="20">
    <location>
        <begin position="10"/>
        <end position="12"/>
    </location>
</feature>
<feature type="helix" evidence="20">
    <location>
        <begin position="14"/>
        <end position="17"/>
    </location>
</feature>
<feature type="helix" evidence="20">
    <location>
        <begin position="18"/>
        <end position="20"/>
    </location>
</feature>
<feature type="turn" evidence="20">
    <location>
        <begin position="30"/>
        <end position="32"/>
    </location>
</feature>
<feature type="strand" evidence="20">
    <location>
        <begin position="38"/>
        <end position="49"/>
    </location>
</feature>
<feature type="helix" evidence="16">
    <location>
        <begin position="51"/>
        <end position="53"/>
    </location>
</feature>
<feature type="strand" evidence="20">
    <location>
        <begin position="54"/>
        <end position="56"/>
    </location>
</feature>
<feature type="helix" evidence="20">
    <location>
        <begin position="57"/>
        <end position="64"/>
    </location>
</feature>
<feature type="turn" evidence="20">
    <location>
        <begin position="65"/>
        <end position="71"/>
    </location>
</feature>
<feature type="strand" evidence="16">
    <location>
        <begin position="72"/>
        <end position="74"/>
    </location>
</feature>
<feature type="turn" evidence="20">
    <location>
        <begin position="75"/>
        <end position="77"/>
    </location>
</feature>
<feature type="strand" evidence="20">
    <location>
        <begin position="78"/>
        <end position="80"/>
    </location>
</feature>
<feature type="strand" evidence="20">
    <location>
        <begin position="84"/>
        <end position="89"/>
    </location>
</feature>
<feature type="strand" evidence="18">
    <location>
        <begin position="94"/>
        <end position="96"/>
    </location>
</feature>
<feature type="strand" evidence="20">
    <location>
        <begin position="103"/>
        <end position="107"/>
    </location>
</feature>
<feature type="strand" evidence="20">
    <location>
        <begin position="109"/>
        <end position="112"/>
    </location>
</feature>
<feature type="strand" evidence="20">
    <location>
        <begin position="114"/>
        <end position="122"/>
    </location>
</feature>
<feature type="strand" evidence="20">
    <location>
        <begin position="132"/>
        <end position="140"/>
    </location>
</feature>
<feature type="strand" evidence="20">
    <location>
        <begin position="142"/>
        <end position="149"/>
    </location>
</feature>
<feature type="turn" evidence="20">
    <location>
        <begin position="150"/>
        <end position="152"/>
    </location>
</feature>
<feature type="strand" evidence="20">
    <location>
        <begin position="153"/>
        <end position="158"/>
    </location>
</feature>
<feature type="helix" evidence="20">
    <location>
        <begin position="159"/>
        <end position="161"/>
    </location>
</feature>
<feature type="strand" evidence="16">
    <location>
        <begin position="167"/>
        <end position="169"/>
    </location>
</feature>
<feature type="strand" evidence="16">
    <location>
        <begin position="216"/>
        <end position="218"/>
    </location>
</feature>
<feature type="strand" evidence="19">
    <location>
        <begin position="220"/>
        <end position="222"/>
    </location>
</feature>
<feature type="strand" evidence="20">
    <location>
        <begin position="229"/>
        <end position="237"/>
    </location>
</feature>
<feature type="strand" evidence="20">
    <location>
        <begin position="239"/>
        <end position="241"/>
    </location>
</feature>
<feature type="strand" evidence="20">
    <location>
        <begin position="244"/>
        <end position="248"/>
    </location>
</feature>
<feature type="strand" evidence="17">
    <location>
        <begin position="264"/>
        <end position="266"/>
    </location>
</feature>
<feature type="turn" evidence="17">
    <location>
        <begin position="267"/>
        <end position="269"/>
    </location>
</feature>
<feature type="helix" evidence="16">
    <location>
        <begin position="273"/>
        <end position="293"/>
    </location>
</feature>
<feature type="strand" evidence="16">
    <location>
        <begin position="307"/>
        <end position="309"/>
    </location>
</feature>
<name>RPA43_YEAST</name>
<accession>P46669</accession>
<accession>D6W335</accession>
<accession>Q99187</accession>
<comment type="function">
    <text evidence="2 5 8 9 10">DNA-dependent RNA polymerases catalyze the transcription of DNA into RNA using the four ribonucleoside triphosphates as substrates. Component of RNA polymerase I (Pol I) which synthesizes ribosomal RNA precursors. Besides, RNA polymerase I has intrinsic RNA cleavage activity. Through its association with RRN3 is involved in recruitment of Pol I to rDNA promoters. In vitro, the A13-A43 subcomplex binds single-stranded RNA.</text>
</comment>
<comment type="subunit">
    <text evidence="2 3 4 8 9 10">Component of the RNA polymerase I (Pol I) complex consisting of 14 subunits: RPA135, RPA190, RPC40, RPA14, RPB5, RPO26, RPA43, RPB8, RPA12, RPB10, RPC19, RPC10, RPA49 and RPA34. The complex is composed of a horseshoe-shaped core containing ten subunits (RPA135, RPA190, RPB5, RPO26, RPB8, RPB10, RPC10, RPA12, RPC19 and RPC40) where RPA135 and RPA190 form the DNA-binding cleft. Outside of the core, RPA14 and RPA43 form the stalk that mediates interactions with transcription initiation factors and newly synthesized RNA. Interacts with RPO26/ABC23 and with the initiation factor RRN3.</text>
</comment>
<comment type="interaction">
    <interactant intactId="EBI-15745">
        <id>P46669</id>
    </interactant>
    <interactant intactId="EBI-15750">
        <id>P50106</id>
        <label>RPA14</label>
    </interactant>
    <organismsDiffer>false</organismsDiffer>
    <experiments>3</experiments>
</comment>
<comment type="subcellular location">
    <subcellularLocation>
        <location evidence="6">Nucleus</location>
        <location evidence="6">Nucleolus</location>
    </subcellularLocation>
</comment>
<comment type="PTM">
    <text>Contains an average of four phosphates per molecule.</text>
</comment>
<comment type="miscellaneous">
    <text evidence="7">Present with 4070 molecules/cell in log phase SD medium.</text>
</comment>
<comment type="similarity">
    <text evidence="11">Belongs to the eukaryotic RPA43 RNA polymerase subunit family.</text>
</comment>
<keyword id="KW-0002">3D-structure</keyword>
<keyword id="KW-0903">Direct protein sequencing</keyword>
<keyword id="KW-0240">DNA-directed RNA polymerase</keyword>
<keyword id="KW-0539">Nucleus</keyword>
<keyword id="KW-0597">Phosphoprotein</keyword>
<keyword id="KW-1185">Reference proteome</keyword>
<keyword id="KW-0690">Ribosome biogenesis</keyword>
<keyword id="KW-0804">Transcription</keyword>
<protein>
    <recommendedName>
        <fullName>DNA-directed RNA polymerase I subunit RPA43</fullName>
        <shortName>A43</shortName>
    </recommendedName>
    <alternativeName>
        <fullName>DNA-directed DNA-dependent RNA polymerase 36 kDa polypeptide</fullName>
    </alternativeName>
</protein>
<reference key="1">
    <citation type="journal article" date="1995" name="J. Biol. Chem.">
        <title>Gene RPA43 in Saccharomyces cerevisiae encodes an essential subunit of RNA polymerase I.</title>
        <authorList>
            <person name="Thuriaux P."/>
            <person name="Mariotte S."/>
            <person name="Buhler J.-M."/>
            <person name="Sentenac A."/>
            <person name="Vu L."/>
            <person name="Lee B.-S."/>
            <person name="Nomura M."/>
        </authorList>
    </citation>
    <scope>NUCLEOTIDE SEQUENCE [GENOMIC DNA]</scope>
    <scope>PROTEIN SEQUENCE OF 89-95 AND 265-276</scope>
</reference>
<reference key="2">
    <citation type="journal article" date="1996" name="Yeast">
        <title>Nucleotide sequence analysis of a 40 kb segment on the right arm of yeast chromosome XV reveals 18 open reading frames including a new pyruvate kinase and three homologues to chromosome I genes.</title>
        <authorList>
            <person name="Purnelle B."/>
            <person name="Goffeau A."/>
        </authorList>
    </citation>
    <scope>NUCLEOTIDE SEQUENCE [GENOMIC DNA]</scope>
    <source>
        <strain>ATCC 90843 / S288c / FY73</strain>
    </source>
</reference>
<reference key="3">
    <citation type="journal article" date="1997" name="Nature">
        <title>The nucleotide sequence of Saccharomyces cerevisiae chromosome XV.</title>
        <authorList>
            <person name="Dujon B."/>
            <person name="Albermann K."/>
            <person name="Aldea M."/>
            <person name="Alexandraki D."/>
            <person name="Ansorge W."/>
            <person name="Arino J."/>
            <person name="Benes V."/>
            <person name="Bohn C."/>
            <person name="Bolotin-Fukuhara M."/>
            <person name="Bordonne R."/>
            <person name="Boyer J."/>
            <person name="Camasses A."/>
            <person name="Casamayor A."/>
            <person name="Casas C."/>
            <person name="Cheret G."/>
            <person name="Cziepluch C."/>
            <person name="Daignan-Fornier B."/>
            <person name="Dang V.-D."/>
            <person name="de Haan M."/>
            <person name="Delius H."/>
            <person name="Durand P."/>
            <person name="Fairhead C."/>
            <person name="Feldmann H."/>
            <person name="Gaillon L."/>
            <person name="Galisson F."/>
            <person name="Gamo F.-J."/>
            <person name="Gancedo C."/>
            <person name="Goffeau A."/>
            <person name="Goulding S.E."/>
            <person name="Grivell L.A."/>
            <person name="Habbig B."/>
            <person name="Hand N.J."/>
            <person name="Hani J."/>
            <person name="Hattenhorst U."/>
            <person name="Hebling U."/>
            <person name="Hernando Y."/>
            <person name="Herrero E."/>
            <person name="Heumann K."/>
            <person name="Hiesel R."/>
            <person name="Hilger F."/>
            <person name="Hofmann B."/>
            <person name="Hollenberg C.P."/>
            <person name="Hughes B."/>
            <person name="Jauniaux J.-C."/>
            <person name="Kalogeropoulos A."/>
            <person name="Katsoulou C."/>
            <person name="Kordes E."/>
            <person name="Lafuente M.J."/>
            <person name="Landt O."/>
            <person name="Louis E.J."/>
            <person name="Maarse A.C."/>
            <person name="Madania A."/>
            <person name="Mannhaupt G."/>
            <person name="Marck C."/>
            <person name="Martin R.P."/>
            <person name="Mewes H.-W."/>
            <person name="Michaux G."/>
            <person name="Paces V."/>
            <person name="Parle-McDermott A.G."/>
            <person name="Pearson B.M."/>
            <person name="Perrin A."/>
            <person name="Pettersson B."/>
            <person name="Poch O."/>
            <person name="Pohl T.M."/>
            <person name="Poirey R."/>
            <person name="Portetelle D."/>
            <person name="Pujol A."/>
            <person name="Purnelle B."/>
            <person name="Ramezani Rad M."/>
            <person name="Rechmann S."/>
            <person name="Schwager C."/>
            <person name="Schweizer M."/>
            <person name="Sor F."/>
            <person name="Sterky F."/>
            <person name="Tarassov I.A."/>
            <person name="Teodoru C."/>
            <person name="Tettelin H."/>
            <person name="Thierry A."/>
            <person name="Tobiasch E."/>
            <person name="Tzermia M."/>
            <person name="Uhlen M."/>
            <person name="Unseld M."/>
            <person name="Valens M."/>
            <person name="Vandenbol M."/>
            <person name="Vetter I."/>
            <person name="Vlcek C."/>
            <person name="Voet M."/>
            <person name="Volckaert G."/>
            <person name="Voss H."/>
            <person name="Wambutt R."/>
            <person name="Wedler H."/>
            <person name="Wiemann S."/>
            <person name="Winsor B."/>
            <person name="Wolfe K.H."/>
            <person name="Zollner A."/>
            <person name="Zumstein E."/>
            <person name="Kleine K."/>
        </authorList>
    </citation>
    <scope>NUCLEOTIDE SEQUENCE [LARGE SCALE GENOMIC DNA]</scope>
    <source>
        <strain>ATCC 204508 / S288c</strain>
    </source>
</reference>
<reference key="4">
    <citation type="journal article" date="2014" name="G3 (Bethesda)">
        <title>The reference genome sequence of Saccharomyces cerevisiae: Then and now.</title>
        <authorList>
            <person name="Engel S.R."/>
            <person name="Dietrich F.S."/>
            <person name="Fisk D.G."/>
            <person name="Binkley G."/>
            <person name="Balakrishnan R."/>
            <person name="Costanzo M.C."/>
            <person name="Dwight S.S."/>
            <person name="Hitz B.C."/>
            <person name="Karra K."/>
            <person name="Nash R.S."/>
            <person name="Weng S."/>
            <person name="Wong E.D."/>
            <person name="Lloyd P."/>
            <person name="Skrzypek M.S."/>
            <person name="Miyasato S.R."/>
            <person name="Simison M."/>
            <person name="Cherry J.M."/>
        </authorList>
    </citation>
    <scope>GENOME REANNOTATION</scope>
    <source>
        <strain>ATCC 204508 / S288c</strain>
    </source>
</reference>
<reference key="5">
    <citation type="journal article" date="2000" name="EMBO J.">
        <title>The recruitment of RNA polymerase I on rDNA is mediated by the interaction of the A43 subunit with Rrn3.</title>
        <authorList>
            <person name="Peyroche G."/>
            <person name="Milkereit P."/>
            <person name="Bischler N."/>
            <person name="Tschochner H."/>
            <person name="Schultz P."/>
            <person name="Sentenac A."/>
            <person name="Carles C."/>
            <person name="Riva M."/>
        </authorList>
    </citation>
    <scope>FUNCTION</scope>
    <scope>INTERACTION WITH RRN3 AND RRN6</scope>
</reference>
<reference key="6">
    <citation type="journal article" date="2001" name="Proc. Natl. Acad. Sci. U.S.A.">
        <title>Differential roles of phosphorylation in the formation of transcriptional active RNA polymerase I.</title>
        <authorList>
            <person name="Fath S."/>
            <person name="Milkereit P."/>
            <person name="Peyroche G."/>
            <person name="Riva M."/>
            <person name="Carles C."/>
            <person name="Tschochner H."/>
        </authorList>
    </citation>
    <scope>IDENTIFICATION IN THE RNA POL I COMPLEX</scope>
</reference>
<reference key="7">
    <citation type="journal article" date="2005" name="Mol. Cell. Proteomics">
        <title>Quantitative phosphoproteomics applied to the yeast pheromone signaling pathway.</title>
        <authorList>
            <person name="Gruhler A."/>
            <person name="Olsen J.V."/>
            <person name="Mohammed S."/>
            <person name="Mortensen P."/>
            <person name="Faergeman N.J."/>
            <person name="Mann M."/>
            <person name="Jensen O.N."/>
        </authorList>
    </citation>
    <scope>PHOSPHORYLATION [LARGE SCALE ANALYSIS] AT SER-285</scope>
    <scope>IDENTIFICATION BY MASS SPECTROMETRY [LARGE SCALE ANALYSIS]</scope>
    <source>
        <strain>YAL6B</strain>
    </source>
</reference>
<reference key="8">
    <citation type="journal article" date="2007" name="J. Proteome Res.">
        <title>Large-scale phosphorylation analysis of alpha-factor-arrested Saccharomyces cerevisiae.</title>
        <authorList>
            <person name="Li X."/>
            <person name="Gerber S.A."/>
            <person name="Rudner A.D."/>
            <person name="Beausoleil S.A."/>
            <person name="Haas W."/>
            <person name="Villen J."/>
            <person name="Elias J.E."/>
            <person name="Gygi S.P."/>
        </authorList>
    </citation>
    <scope>PHOSPHORYLATION [LARGE SCALE ANALYSIS] AT SER-285</scope>
    <scope>IDENTIFICATION BY MASS SPECTROMETRY [LARGE SCALE ANALYSIS]</scope>
    <source>
        <strain>ADR376</strain>
    </source>
</reference>
<reference key="9">
    <citation type="journal article" date="2008" name="Mol. Cell. Proteomics">
        <title>A multidimensional chromatography technology for in-depth phosphoproteome analysis.</title>
        <authorList>
            <person name="Albuquerque C.P."/>
            <person name="Smolka M.B."/>
            <person name="Payne S.H."/>
            <person name="Bafna V."/>
            <person name="Eng J."/>
            <person name="Zhou H."/>
        </authorList>
    </citation>
    <scope>PHOSPHORYLATION [LARGE SCALE ANALYSIS] AT SER-244; SER-251; SER-265; SER-269 AND SER-285</scope>
    <scope>IDENTIFICATION BY MASS SPECTROMETRY [LARGE SCALE ANALYSIS]</scope>
</reference>
<reference key="10">
    <citation type="journal article" date="2009" name="Science">
        <title>Global analysis of Cdk1 substrate phosphorylation sites provides insights into evolution.</title>
        <authorList>
            <person name="Holt L.J."/>
            <person name="Tuch B.B."/>
            <person name="Villen J."/>
            <person name="Johnson A.D."/>
            <person name="Gygi S.P."/>
            <person name="Morgan D.O."/>
        </authorList>
    </citation>
    <scope>PHOSPHORYLATION [LARGE SCALE ANALYSIS] AT SER-265 AND SER-285</scope>
    <scope>IDENTIFICATION BY MASS SPECTROMETRY [LARGE SCALE ANALYSIS]</scope>
</reference>
<reference key="11">
    <citation type="journal article" date="2002" name="EMBO J.">
        <title>Localization of the yeast RNA polymerase I-specific subunits.</title>
        <authorList>
            <person name="Bischler N."/>
            <person name="Brino L."/>
            <person name="Carles C."/>
            <person name="Riva M."/>
            <person name="Tschochner H."/>
            <person name="Mallouh V."/>
            <person name="Schultz P."/>
        </authorList>
    </citation>
    <scope>ELECTRON MICROSCOPY OF THE RNA POLYMERASE I COMPLEX</scope>
</reference>
<reference key="12">
    <citation type="journal article" date="2002" name="Proc. Natl. Acad. Sci. U.S.A.">
        <title>The A14-A43 heterodimer subunit in yeast RNA pol I and their relationship to Rpb4-Rpb7 pol II subunits.</title>
        <authorList>
            <person name="Peyroche G."/>
            <person name="Levillain E."/>
            <person name="Siaut M."/>
            <person name="Callebaut I."/>
            <person name="Schultz P."/>
            <person name="Sentenac A."/>
            <person name="Riva M."/>
            <person name="Carles C."/>
        </authorList>
    </citation>
    <scope>IDENTIFICATION IN THE RNA POL I COMPLEX</scope>
    <scope>INTERACTION WITH RPA14 AND RPO26</scope>
</reference>
<reference key="13">
    <citation type="journal article" date="2003" name="Nature">
        <title>Global analysis of protein localization in budding yeast.</title>
        <authorList>
            <person name="Huh W.-K."/>
            <person name="Falvo J.V."/>
            <person name="Gerke L.C."/>
            <person name="Carroll A.S."/>
            <person name="Howson R.W."/>
            <person name="Weissman J.S."/>
            <person name="O'Shea E.K."/>
        </authorList>
    </citation>
    <scope>SUBCELLULAR LOCATION [LARGE SCALE ANALYSIS]</scope>
</reference>
<reference key="14">
    <citation type="journal article" date="2003" name="Nature">
        <title>Global analysis of protein expression in yeast.</title>
        <authorList>
            <person name="Ghaemmaghami S."/>
            <person name="Huh W.-K."/>
            <person name="Bower K."/>
            <person name="Howson R.W."/>
            <person name="Belle A."/>
            <person name="Dephoure N."/>
            <person name="O'Shea E.K."/>
            <person name="Weissman J.S."/>
        </authorList>
    </citation>
    <scope>LEVEL OF PROTEIN EXPRESSION [LARGE SCALE ANALYSIS]</scope>
</reference>
<reference key="15">
    <citation type="journal article" date="2003" name="Nucleic Acids Res.">
        <title>Structural and functional homology between the RNAP(I) subunits A14/A43 and the archaeal RNAP subunits E/F.</title>
        <authorList>
            <person name="Meka H."/>
            <person name="Daoust G."/>
            <person name="Arnvig K.B."/>
            <person name="Werner F."/>
            <person name="Brick P."/>
            <person name="Onesti S."/>
        </authorList>
    </citation>
    <scope>FUNCTION</scope>
</reference>
<reference key="16">
    <citation type="journal article" date="2007" name="Cell">
        <title>Functional architecture of RNA polymerase I.</title>
        <authorList>
            <person name="Kuhn C.D."/>
            <person name="Geiger S.R."/>
            <person name="Baumli S."/>
            <person name="Gartmann M."/>
            <person name="Gerber J."/>
            <person name="Jennebach S."/>
            <person name="Mielke T."/>
            <person name="Tschochner H."/>
            <person name="Beckmann R."/>
            <person name="Cramer P."/>
        </authorList>
    </citation>
    <scope>X-RAY CRYSTALLOGRAPHY (3.1 ANGSTROMS) OF 2-251</scope>
    <scope>STRUCTURE BY ELECTRON MICROSCOPY (12.00 ANGSTROMS) OF THE POL I COMPLEX</scope>
    <scope>FUNCTION</scope>
    <scope>SUBUNIT</scope>
</reference>
<reference key="17">
    <citation type="journal article" date="2013" name="Nature">
        <title>Crystal structure of the 14-subunit RNA polymerase I.</title>
        <authorList>
            <person name="Fernandez-Tornero C."/>
            <person name="Moreno-Morcillo M."/>
            <person name="Rashid U.J."/>
            <person name="Taylor N.M."/>
            <person name="Ruiz F.M."/>
            <person name="Gruene T."/>
            <person name="Legrand P."/>
            <person name="Steuerwald U."/>
            <person name="Muller C.W."/>
        </authorList>
    </citation>
    <scope>X-RAY CRYSTALLOGRAPHY (3.0 ANGSTROMS) OF THE POL I COMPLEX</scope>
    <scope>FUNCTION</scope>
    <scope>SUBUNIT</scope>
</reference>
<reference key="18">
    <citation type="journal article" date="2013" name="Nature">
        <title>RNA polymerase I structure and transcription regulation.</title>
        <authorList>
            <person name="Engel C."/>
            <person name="Sainsbury S."/>
            <person name="Cheung A.C."/>
            <person name="Kostrewa D."/>
            <person name="Cramer P."/>
        </authorList>
    </citation>
    <scope>X-RAY CRYSTALLOGRAPHY (2.8 ANGSTROMS) OF THE POL I COMPLEX</scope>
    <scope>FUNCTION</scope>
    <scope>SUBUNIT</scope>
</reference>
<sequence length="326" mass="36224">MSQVKRANENRETARFIKKHKKQVTNPIDEKNGTSNCIVRVPIALYVSLAPMYLENPLQGVMKQHLNPLVMKYNNKVGGVVLGYEGLKILDADPLSKEDTSEKLIKITPDTPFGFTWCHVNLYVWQPQVGDVLEGYIFIQSASHIGLLIHDAFNASIKKNNIPVDWTFVHNDVEEDADVINTDENNGNNNNEDNKDSNGGSNSLGKFSFGNRSLGHWVDSNGEPIDGKLRFTVRNVHTTGRVVSVDGTLISDADEEGNGYNSSRSQAESLPIVSNKKIVFDDEVSIENKESHKELDLPEVKEDNGSEIVYEENTSESNDGESSDSD</sequence>
<proteinExistence type="evidence at protein level"/>
<gene>
    <name type="primary">RPA43</name>
    <name type="synonym">RRN12</name>
    <name type="ordered locus">YOR340C</name>
    <name type="ORF">O6271</name>
</gene>
<dbReference type="EMBL" id="U22949">
    <property type="protein sequence ID" value="AAC49076.1"/>
    <property type="molecule type" value="Genomic_DNA"/>
</dbReference>
<dbReference type="EMBL" id="X95720">
    <property type="protein sequence ID" value="CAA65028.1"/>
    <property type="molecule type" value="Genomic_DNA"/>
</dbReference>
<dbReference type="EMBL" id="Z75248">
    <property type="protein sequence ID" value="CAA99664.1"/>
    <property type="molecule type" value="Genomic_DNA"/>
</dbReference>
<dbReference type="EMBL" id="BK006948">
    <property type="protein sequence ID" value="DAA11101.1"/>
    <property type="molecule type" value="Genomic_DNA"/>
</dbReference>
<dbReference type="PIR" id="S67249">
    <property type="entry name" value="S67249"/>
</dbReference>
<dbReference type="RefSeq" id="NP_014985.1">
    <property type="nucleotide sequence ID" value="NM_001183760.1"/>
</dbReference>
<dbReference type="PDB" id="2RF4">
    <property type="method" value="X-ray"/>
    <property type="resolution" value="3.10 A"/>
    <property type="chains" value="A/C/E=1-251"/>
</dbReference>
<dbReference type="PDB" id="4C2M">
    <property type="method" value="X-ray"/>
    <property type="resolution" value="2.80 A"/>
    <property type="chains" value="4/G/O/V=1-326"/>
</dbReference>
<dbReference type="PDB" id="4C3H">
    <property type="method" value="X-ray"/>
    <property type="resolution" value="3.27 A"/>
    <property type="chains" value="G=1-326"/>
</dbReference>
<dbReference type="PDB" id="4C3I">
    <property type="method" value="X-ray"/>
    <property type="resolution" value="3.00 A"/>
    <property type="chains" value="G=1-326"/>
</dbReference>
<dbReference type="PDB" id="4C3J">
    <property type="method" value="X-ray"/>
    <property type="resolution" value="3.35 A"/>
    <property type="chains" value="G=1-326"/>
</dbReference>
<dbReference type="PDB" id="4YM7">
    <property type="method" value="X-ray"/>
    <property type="resolution" value="5.50 A"/>
    <property type="chains" value="AG/AO/BG/BO/CG/CO/DG/DO/EG/EO/FG/FO=1-326"/>
</dbReference>
<dbReference type="PDB" id="5G5L">
    <property type="method" value="EM"/>
    <property type="resolution" value="4.80 A"/>
    <property type="chains" value="G=1-326"/>
</dbReference>
<dbReference type="PDB" id="5LMX">
    <property type="method" value="EM"/>
    <property type="resolution" value="4.90 A"/>
    <property type="chains" value="G=1-326"/>
</dbReference>
<dbReference type="PDB" id="5M3F">
    <property type="method" value="EM"/>
    <property type="resolution" value="3.80 A"/>
    <property type="chains" value="G=1-326"/>
</dbReference>
<dbReference type="PDB" id="5M3M">
    <property type="method" value="EM"/>
    <property type="resolution" value="4.00 A"/>
    <property type="chains" value="G=1-326"/>
</dbReference>
<dbReference type="PDB" id="5M5W">
    <property type="method" value="EM"/>
    <property type="resolution" value="3.80 A"/>
    <property type="chains" value="G=1-326"/>
</dbReference>
<dbReference type="PDB" id="5M5X">
    <property type="method" value="EM"/>
    <property type="resolution" value="4.00 A"/>
    <property type="chains" value="G=1-326"/>
</dbReference>
<dbReference type="PDB" id="5M5Y">
    <property type="method" value="EM"/>
    <property type="resolution" value="4.00 A"/>
    <property type="chains" value="G=1-326"/>
</dbReference>
<dbReference type="PDB" id="5M64">
    <property type="method" value="EM"/>
    <property type="resolution" value="4.60 A"/>
    <property type="chains" value="G=1-326"/>
</dbReference>
<dbReference type="PDB" id="5N5Y">
    <property type="method" value="EM"/>
    <property type="resolution" value="7.70 A"/>
    <property type="chains" value="G=1-326"/>
</dbReference>
<dbReference type="PDB" id="5N5Z">
    <property type="method" value="EM"/>
    <property type="resolution" value="7.70 A"/>
    <property type="chains" value="G=1-326"/>
</dbReference>
<dbReference type="PDB" id="5N60">
    <property type="method" value="EM"/>
    <property type="resolution" value="7.70 A"/>
    <property type="chains" value="G=1-326"/>
</dbReference>
<dbReference type="PDB" id="5N61">
    <property type="method" value="EM"/>
    <property type="resolution" value="3.40 A"/>
    <property type="chains" value="G=1-326"/>
</dbReference>
<dbReference type="PDB" id="5OA1">
    <property type="method" value="EM"/>
    <property type="resolution" value="4.40 A"/>
    <property type="chains" value="G=1-326"/>
</dbReference>
<dbReference type="PDB" id="5W5Y">
    <property type="method" value="EM"/>
    <property type="resolution" value="3.80 A"/>
    <property type="chains" value="G=1-326"/>
</dbReference>
<dbReference type="PDB" id="5W64">
    <property type="method" value="EM"/>
    <property type="resolution" value="4.20 A"/>
    <property type="chains" value="G=1-326"/>
</dbReference>
<dbReference type="PDB" id="5W65">
    <property type="method" value="EM"/>
    <property type="resolution" value="4.30 A"/>
    <property type="chains" value="G=1-326"/>
</dbReference>
<dbReference type="PDB" id="5W66">
    <property type="method" value="EM"/>
    <property type="resolution" value="3.90 A"/>
    <property type="chains" value="G=1-326"/>
</dbReference>
<dbReference type="PDB" id="6H67">
    <property type="method" value="EM"/>
    <property type="resolution" value="3.60 A"/>
    <property type="chains" value="G=1-326"/>
</dbReference>
<dbReference type="PDB" id="6H68">
    <property type="method" value="EM"/>
    <property type="resolution" value="4.60 A"/>
    <property type="chains" value="G=1-326"/>
</dbReference>
<dbReference type="PDB" id="6HKO">
    <property type="method" value="EM"/>
    <property type="resolution" value="3.42 A"/>
    <property type="chains" value="G=1-326"/>
</dbReference>
<dbReference type="PDB" id="6HLQ">
    <property type="method" value="EM"/>
    <property type="resolution" value="3.18 A"/>
    <property type="chains" value="G=1-326"/>
</dbReference>
<dbReference type="PDB" id="6HLR">
    <property type="method" value="EM"/>
    <property type="resolution" value="3.18 A"/>
    <property type="chains" value="G=1-326"/>
</dbReference>
<dbReference type="PDB" id="6HLS">
    <property type="method" value="EM"/>
    <property type="resolution" value="3.21 A"/>
    <property type="chains" value="G=1-326"/>
</dbReference>
<dbReference type="PDB" id="6RQH">
    <property type="method" value="EM"/>
    <property type="resolution" value="3.70 A"/>
    <property type="chains" value="G=1-326"/>
</dbReference>
<dbReference type="PDB" id="6RQL">
    <property type="method" value="EM"/>
    <property type="resolution" value="2.90 A"/>
    <property type="chains" value="G=1-326"/>
</dbReference>
<dbReference type="PDB" id="6RQT">
    <property type="method" value="EM"/>
    <property type="resolution" value="4.00 A"/>
    <property type="chains" value="G=1-326"/>
</dbReference>
<dbReference type="PDB" id="6RRD">
    <property type="method" value="EM"/>
    <property type="resolution" value="3.10 A"/>
    <property type="chains" value="G=1-326"/>
</dbReference>
<dbReference type="PDB" id="6RUI">
    <property type="method" value="EM"/>
    <property type="resolution" value="2.70 A"/>
    <property type="chains" value="G=1-326"/>
</dbReference>
<dbReference type="PDB" id="6RUO">
    <property type="method" value="EM"/>
    <property type="resolution" value="3.50 A"/>
    <property type="chains" value="G=1-326"/>
</dbReference>
<dbReference type="PDB" id="6RWE">
    <property type="method" value="EM"/>
    <property type="resolution" value="3.00 A"/>
    <property type="chains" value="G=1-326"/>
</dbReference>
<dbReference type="PDB" id="6TPS">
    <property type="method" value="EM"/>
    <property type="resolution" value="3.54 A"/>
    <property type="chains" value="G=1-326"/>
</dbReference>
<dbReference type="PDBsum" id="2RF4"/>
<dbReference type="PDBsum" id="4C2M"/>
<dbReference type="PDBsum" id="4C3H"/>
<dbReference type="PDBsum" id="4C3I"/>
<dbReference type="PDBsum" id="4C3J"/>
<dbReference type="PDBsum" id="4YM7"/>
<dbReference type="PDBsum" id="5G5L"/>
<dbReference type="PDBsum" id="5LMX"/>
<dbReference type="PDBsum" id="5M3F"/>
<dbReference type="PDBsum" id="5M3M"/>
<dbReference type="PDBsum" id="5M5W"/>
<dbReference type="PDBsum" id="5M5X"/>
<dbReference type="PDBsum" id="5M5Y"/>
<dbReference type="PDBsum" id="5M64"/>
<dbReference type="PDBsum" id="5N5Y"/>
<dbReference type="PDBsum" id="5N5Z"/>
<dbReference type="PDBsum" id="5N60"/>
<dbReference type="PDBsum" id="5N61"/>
<dbReference type="PDBsum" id="5OA1"/>
<dbReference type="PDBsum" id="5W5Y"/>
<dbReference type="PDBsum" id="5W64"/>
<dbReference type="PDBsum" id="5W65"/>
<dbReference type="PDBsum" id="5W66"/>
<dbReference type="PDBsum" id="6H67"/>
<dbReference type="PDBsum" id="6H68"/>
<dbReference type="PDBsum" id="6HKO"/>
<dbReference type="PDBsum" id="6HLQ"/>
<dbReference type="PDBsum" id="6HLR"/>
<dbReference type="PDBsum" id="6HLS"/>
<dbReference type="PDBsum" id="6RQH"/>
<dbReference type="PDBsum" id="6RQL"/>
<dbReference type="PDBsum" id="6RQT"/>
<dbReference type="PDBsum" id="6RRD"/>
<dbReference type="PDBsum" id="6RUI"/>
<dbReference type="PDBsum" id="6RUO"/>
<dbReference type="PDBsum" id="6RWE"/>
<dbReference type="PDBsum" id="6TPS"/>
<dbReference type="EMDB" id="EMD-0146"/>
<dbReference type="EMDB" id="EMD-0147"/>
<dbReference type="EMDB" id="EMD-0238"/>
<dbReference type="EMDB" id="EMD-0239"/>
<dbReference type="EMDB" id="EMD-0240"/>
<dbReference type="EMDB" id="EMD-0241"/>
<dbReference type="EMDB" id="EMD-10006"/>
<dbReference type="EMDB" id="EMD-10007"/>
<dbReference type="EMDB" id="EMD-10038"/>
<dbReference type="EMDB" id="EMD-10544"/>
<dbReference type="EMDB" id="EMD-3446"/>
<dbReference type="EMDB" id="EMD-3447"/>
<dbReference type="EMDB" id="EMD-3448"/>
<dbReference type="EMDB" id="EMD-3449"/>
<dbReference type="EMDB" id="EMD-3590"/>
<dbReference type="EMDB" id="EMD-3591"/>
<dbReference type="EMDB" id="EMD-3592"/>
<dbReference type="EMDB" id="EMD-3593"/>
<dbReference type="EMDB" id="EMD-4088"/>
<dbReference type="EMDB" id="EMD-4147"/>
<dbReference type="EMDB" id="EMD-4148"/>
<dbReference type="EMDB" id="EMD-4982"/>
<dbReference type="EMDB" id="EMD-4984"/>
<dbReference type="EMDB" id="EMD-4985"/>
<dbReference type="EMDB" id="EMD-4987"/>
<dbReference type="EMDB" id="EMD-8771"/>
<dbReference type="EMDB" id="EMD-8773"/>
<dbReference type="EMDB" id="EMD-8774"/>
<dbReference type="EMDB" id="EMD-8775"/>
<dbReference type="EMDB" id="EMD-8776"/>
<dbReference type="EMDB" id="EMD-8777"/>
<dbReference type="SMR" id="P46669"/>
<dbReference type="BioGRID" id="34723">
    <property type="interactions" value="182"/>
</dbReference>
<dbReference type="ComplexPortal" id="CPX-1664">
    <property type="entry name" value="DNA-directed RNA Polymerase I complex"/>
</dbReference>
<dbReference type="DIP" id="DIP-5405N"/>
<dbReference type="FunCoup" id="P46669">
    <property type="interactions" value="378"/>
</dbReference>
<dbReference type="IntAct" id="P46669">
    <property type="interactions" value="29"/>
</dbReference>
<dbReference type="MINT" id="P46669"/>
<dbReference type="STRING" id="4932.YOR340C"/>
<dbReference type="iPTMnet" id="P46669"/>
<dbReference type="PaxDb" id="4932-YOR340C"/>
<dbReference type="PeptideAtlas" id="P46669"/>
<dbReference type="EnsemblFungi" id="YOR340C_mRNA">
    <property type="protein sequence ID" value="YOR340C"/>
    <property type="gene ID" value="YOR340C"/>
</dbReference>
<dbReference type="GeneID" id="854518"/>
<dbReference type="KEGG" id="sce:YOR340C"/>
<dbReference type="AGR" id="SGD:S000005867"/>
<dbReference type="SGD" id="S000005867">
    <property type="gene designation" value="RPA43"/>
</dbReference>
<dbReference type="VEuPathDB" id="FungiDB:YOR340C"/>
<dbReference type="eggNOG" id="KOG4134">
    <property type="taxonomic scope" value="Eukaryota"/>
</dbReference>
<dbReference type="GeneTree" id="ENSGT00390000005553"/>
<dbReference type="HOGENOM" id="CLU_060987_0_0_1"/>
<dbReference type="InParanoid" id="P46669"/>
<dbReference type="OMA" id="YMQTASH"/>
<dbReference type="OrthoDB" id="10250504at2759"/>
<dbReference type="BioCyc" id="YEAST:G3O-33815-MONOMER"/>
<dbReference type="Reactome" id="R-SCE-73762">
    <property type="pathway name" value="RNA Polymerase I Transcription Initiation"/>
</dbReference>
<dbReference type="Reactome" id="R-SCE-73772">
    <property type="pathway name" value="RNA Polymerase I Promoter Escape"/>
</dbReference>
<dbReference type="BioGRID-ORCS" id="854518">
    <property type="hits" value="2 hits in 10 CRISPR screens"/>
</dbReference>
<dbReference type="EvolutionaryTrace" id="P46669"/>
<dbReference type="PRO" id="PR:P46669"/>
<dbReference type="Proteomes" id="UP000002311">
    <property type="component" value="Chromosome XV"/>
</dbReference>
<dbReference type="RNAct" id="P46669">
    <property type="molecule type" value="protein"/>
</dbReference>
<dbReference type="GO" id="GO:0005634">
    <property type="term" value="C:nucleus"/>
    <property type="evidence" value="ECO:0000314"/>
    <property type="project" value="ComplexPortal"/>
</dbReference>
<dbReference type="GO" id="GO:0005736">
    <property type="term" value="C:RNA polymerase I complex"/>
    <property type="evidence" value="ECO:0000314"/>
    <property type="project" value="UniProtKB"/>
</dbReference>
<dbReference type="GO" id="GO:0003899">
    <property type="term" value="F:DNA-directed RNA polymerase activity"/>
    <property type="evidence" value="ECO:0000314"/>
    <property type="project" value="UniProtKB"/>
</dbReference>
<dbReference type="GO" id="GO:0042790">
    <property type="term" value="P:nucleolar large rRNA transcription by RNA polymerase I"/>
    <property type="evidence" value="ECO:0000314"/>
    <property type="project" value="ComplexPortal"/>
</dbReference>
<dbReference type="GO" id="GO:0042254">
    <property type="term" value="P:ribosome biogenesis"/>
    <property type="evidence" value="ECO:0007669"/>
    <property type="project" value="UniProtKB-KW"/>
</dbReference>
<dbReference type="GO" id="GO:0006363">
    <property type="term" value="P:termination of RNA polymerase I transcription"/>
    <property type="evidence" value="ECO:0000314"/>
    <property type="project" value="ComplexPortal"/>
</dbReference>
<dbReference type="GO" id="GO:0006360">
    <property type="term" value="P:transcription by RNA polymerase I"/>
    <property type="evidence" value="ECO:0000314"/>
    <property type="project" value="UniProtKB"/>
</dbReference>
<dbReference type="GO" id="GO:0006362">
    <property type="term" value="P:transcription elongation by RNA polymerase I"/>
    <property type="evidence" value="ECO:0000314"/>
    <property type="project" value="ComplexPortal"/>
</dbReference>
<dbReference type="GO" id="GO:0006361">
    <property type="term" value="P:transcription initiation at RNA polymerase I promoter"/>
    <property type="evidence" value="ECO:0000314"/>
    <property type="project" value="ComplexPortal"/>
</dbReference>
<dbReference type="CDD" id="cd04328">
    <property type="entry name" value="RNAP_I_Rpa43_N"/>
    <property type="match status" value="1"/>
</dbReference>
<dbReference type="DisProt" id="DP01185"/>
<dbReference type="FunFam" id="3.30.1490.120:FF:000004">
    <property type="entry name" value="RNA polymerase I subunit Rpa43"/>
    <property type="match status" value="1"/>
</dbReference>
<dbReference type="Gene3D" id="6.10.140.1770">
    <property type="match status" value="1"/>
</dbReference>
<dbReference type="Gene3D" id="2.40.50.140">
    <property type="entry name" value="Nucleic acid-binding proteins"/>
    <property type="match status" value="1"/>
</dbReference>
<dbReference type="Gene3D" id="3.30.1490.120">
    <property type="entry name" value="RNA polymerase Rpb7-like, N-terminal domain"/>
    <property type="match status" value="1"/>
</dbReference>
<dbReference type="InterPro" id="IPR012340">
    <property type="entry name" value="NA-bd_OB-fold"/>
</dbReference>
<dbReference type="InterPro" id="IPR036898">
    <property type="entry name" value="RNA_pol_Rpb7-like_N_sf"/>
</dbReference>
<dbReference type="InterPro" id="IPR041901">
    <property type="entry name" value="RNAP_I_Rpa43_N"/>
</dbReference>
<dbReference type="InterPro" id="IPR041178">
    <property type="entry name" value="RPA43_OB"/>
</dbReference>
<dbReference type="InterPro" id="IPR045113">
    <property type="entry name" value="Rpb7-like"/>
</dbReference>
<dbReference type="InterPro" id="IPR005576">
    <property type="entry name" value="Rpb7-like_N"/>
</dbReference>
<dbReference type="PANTHER" id="PTHR12709:SF5">
    <property type="entry name" value="DNA-DIRECTED RNA POLYMERASE I SUBUNIT RPA43"/>
    <property type="match status" value="1"/>
</dbReference>
<dbReference type="PANTHER" id="PTHR12709">
    <property type="entry name" value="DNA-DIRECTED RNA POLYMERASE II, III"/>
    <property type="match status" value="1"/>
</dbReference>
<dbReference type="Pfam" id="PF17875">
    <property type="entry name" value="RPA43_OB"/>
    <property type="match status" value="1"/>
</dbReference>
<dbReference type="Pfam" id="PF03876">
    <property type="entry name" value="SHS2_Rpb7-N"/>
    <property type="match status" value="1"/>
</dbReference>
<evidence type="ECO:0000256" key="1">
    <source>
        <dbReference type="SAM" id="MobiDB-lite"/>
    </source>
</evidence>
<evidence type="ECO:0000269" key="2">
    <source>
    </source>
</evidence>
<evidence type="ECO:0000269" key="3">
    <source>
    </source>
</evidence>
<evidence type="ECO:0000269" key="4">
    <source>
    </source>
</evidence>
<evidence type="ECO:0000269" key="5">
    <source>
    </source>
</evidence>
<evidence type="ECO:0000269" key="6">
    <source>
    </source>
</evidence>
<evidence type="ECO:0000269" key="7">
    <source>
    </source>
</evidence>
<evidence type="ECO:0000269" key="8">
    <source>
    </source>
</evidence>
<evidence type="ECO:0000269" key="9">
    <source>
    </source>
</evidence>
<evidence type="ECO:0000269" key="10">
    <source>
    </source>
</evidence>
<evidence type="ECO:0000305" key="11"/>
<evidence type="ECO:0007744" key="12">
    <source>
    </source>
</evidence>
<evidence type="ECO:0007744" key="13">
    <source>
    </source>
</evidence>
<evidence type="ECO:0007744" key="14">
    <source>
    </source>
</evidence>
<evidence type="ECO:0007744" key="15">
    <source>
    </source>
</evidence>
<evidence type="ECO:0007829" key="16">
    <source>
        <dbReference type="PDB" id="4C2M"/>
    </source>
</evidence>
<evidence type="ECO:0007829" key="17">
    <source>
        <dbReference type="PDB" id="4C3I"/>
    </source>
</evidence>
<evidence type="ECO:0007829" key="18">
    <source>
        <dbReference type="PDB" id="5N61"/>
    </source>
</evidence>
<evidence type="ECO:0007829" key="19">
    <source>
        <dbReference type="PDB" id="6RQL"/>
    </source>
</evidence>
<evidence type="ECO:0007829" key="20">
    <source>
        <dbReference type="PDB" id="6RUI"/>
    </source>
</evidence>